<evidence type="ECO:0000255" key="1">
    <source>
        <dbReference type="HAMAP-Rule" id="MF_00152"/>
    </source>
</evidence>
<protein>
    <recommendedName>
        <fullName evidence="1">Probable endonuclease 4</fullName>
        <ecNumber evidence="1">3.1.21.2</ecNumber>
    </recommendedName>
    <alternativeName>
        <fullName evidence="1">Endodeoxyribonuclease IV</fullName>
    </alternativeName>
    <alternativeName>
        <fullName evidence="1">Endonuclease IV</fullName>
    </alternativeName>
</protein>
<accession>B0BTA9</accession>
<feature type="chain" id="PRO_1000096866" description="Probable endonuclease 4">
    <location>
        <begin position="1"/>
        <end position="280"/>
    </location>
</feature>
<feature type="binding site" evidence="1">
    <location>
        <position position="69"/>
    </location>
    <ligand>
        <name>Zn(2+)</name>
        <dbReference type="ChEBI" id="CHEBI:29105"/>
        <label>1</label>
    </ligand>
</feature>
<feature type="binding site" evidence="1">
    <location>
        <position position="109"/>
    </location>
    <ligand>
        <name>Zn(2+)</name>
        <dbReference type="ChEBI" id="CHEBI:29105"/>
        <label>1</label>
    </ligand>
</feature>
<feature type="binding site" evidence="1">
    <location>
        <position position="145"/>
    </location>
    <ligand>
        <name>Zn(2+)</name>
        <dbReference type="ChEBI" id="CHEBI:29105"/>
        <label>1</label>
    </ligand>
</feature>
<feature type="binding site" evidence="1">
    <location>
        <position position="145"/>
    </location>
    <ligand>
        <name>Zn(2+)</name>
        <dbReference type="ChEBI" id="CHEBI:29105"/>
        <label>2</label>
    </ligand>
</feature>
<feature type="binding site" evidence="1">
    <location>
        <position position="179"/>
    </location>
    <ligand>
        <name>Zn(2+)</name>
        <dbReference type="ChEBI" id="CHEBI:29105"/>
        <label>2</label>
    </ligand>
</feature>
<feature type="binding site" evidence="1">
    <location>
        <position position="182"/>
    </location>
    <ligand>
        <name>Zn(2+)</name>
        <dbReference type="ChEBI" id="CHEBI:29105"/>
        <label>3</label>
    </ligand>
</feature>
<feature type="binding site" evidence="1">
    <location>
        <position position="216"/>
    </location>
    <ligand>
        <name>Zn(2+)</name>
        <dbReference type="ChEBI" id="CHEBI:29105"/>
        <label>2</label>
    </ligand>
</feature>
<feature type="binding site" evidence="1">
    <location>
        <position position="229"/>
    </location>
    <ligand>
        <name>Zn(2+)</name>
        <dbReference type="ChEBI" id="CHEBI:29105"/>
        <label>3</label>
    </ligand>
</feature>
<feature type="binding site" evidence="1">
    <location>
        <position position="231"/>
    </location>
    <ligand>
        <name>Zn(2+)</name>
        <dbReference type="ChEBI" id="CHEBI:29105"/>
        <label>3</label>
    </ligand>
</feature>
<feature type="binding site" evidence="1">
    <location>
        <position position="261"/>
    </location>
    <ligand>
        <name>Zn(2+)</name>
        <dbReference type="ChEBI" id="CHEBI:29105"/>
        <label>2</label>
    </ligand>
</feature>
<dbReference type="EC" id="3.1.21.2" evidence="1"/>
<dbReference type="EMBL" id="CP000687">
    <property type="protein sequence ID" value="ABY68966.1"/>
    <property type="molecule type" value="Genomic_DNA"/>
</dbReference>
<dbReference type="RefSeq" id="WP_005600458.1">
    <property type="nucleotide sequence ID" value="NC_010278.1"/>
</dbReference>
<dbReference type="SMR" id="B0BTA9"/>
<dbReference type="KEGG" id="apj:APJL_0375"/>
<dbReference type="HOGENOM" id="CLU_025885_0_4_6"/>
<dbReference type="Proteomes" id="UP000008547">
    <property type="component" value="Chromosome"/>
</dbReference>
<dbReference type="GO" id="GO:0008833">
    <property type="term" value="F:deoxyribonuclease IV (phage-T4-induced) activity"/>
    <property type="evidence" value="ECO:0007669"/>
    <property type="project" value="UniProtKB-UniRule"/>
</dbReference>
<dbReference type="GO" id="GO:0003677">
    <property type="term" value="F:DNA binding"/>
    <property type="evidence" value="ECO:0007669"/>
    <property type="project" value="InterPro"/>
</dbReference>
<dbReference type="GO" id="GO:0003906">
    <property type="term" value="F:DNA-(apurinic or apyrimidinic site) endonuclease activity"/>
    <property type="evidence" value="ECO:0007669"/>
    <property type="project" value="TreeGrafter"/>
</dbReference>
<dbReference type="GO" id="GO:0008081">
    <property type="term" value="F:phosphoric diester hydrolase activity"/>
    <property type="evidence" value="ECO:0007669"/>
    <property type="project" value="TreeGrafter"/>
</dbReference>
<dbReference type="GO" id="GO:0008270">
    <property type="term" value="F:zinc ion binding"/>
    <property type="evidence" value="ECO:0007669"/>
    <property type="project" value="UniProtKB-UniRule"/>
</dbReference>
<dbReference type="GO" id="GO:0006284">
    <property type="term" value="P:base-excision repair"/>
    <property type="evidence" value="ECO:0007669"/>
    <property type="project" value="TreeGrafter"/>
</dbReference>
<dbReference type="CDD" id="cd00019">
    <property type="entry name" value="AP2Ec"/>
    <property type="match status" value="1"/>
</dbReference>
<dbReference type="FunFam" id="3.20.20.150:FF:000001">
    <property type="entry name" value="Probable endonuclease 4"/>
    <property type="match status" value="1"/>
</dbReference>
<dbReference type="Gene3D" id="3.20.20.150">
    <property type="entry name" value="Divalent-metal-dependent TIM barrel enzymes"/>
    <property type="match status" value="1"/>
</dbReference>
<dbReference type="HAMAP" id="MF_00152">
    <property type="entry name" value="Nfo"/>
    <property type="match status" value="1"/>
</dbReference>
<dbReference type="InterPro" id="IPR001719">
    <property type="entry name" value="AP_endonuc_2"/>
</dbReference>
<dbReference type="InterPro" id="IPR018246">
    <property type="entry name" value="AP_endonuc_F2_Zn_BS"/>
</dbReference>
<dbReference type="InterPro" id="IPR036237">
    <property type="entry name" value="Xyl_isomerase-like_sf"/>
</dbReference>
<dbReference type="InterPro" id="IPR013022">
    <property type="entry name" value="Xyl_isomerase-like_TIM-brl"/>
</dbReference>
<dbReference type="NCBIfam" id="TIGR00587">
    <property type="entry name" value="nfo"/>
    <property type="match status" value="1"/>
</dbReference>
<dbReference type="NCBIfam" id="NF002199">
    <property type="entry name" value="PRK01060.1-4"/>
    <property type="match status" value="1"/>
</dbReference>
<dbReference type="PANTHER" id="PTHR21445:SF0">
    <property type="entry name" value="APURINIC-APYRIMIDINIC ENDONUCLEASE"/>
    <property type="match status" value="1"/>
</dbReference>
<dbReference type="PANTHER" id="PTHR21445">
    <property type="entry name" value="ENDONUCLEASE IV ENDODEOXYRIBONUCLEASE IV"/>
    <property type="match status" value="1"/>
</dbReference>
<dbReference type="Pfam" id="PF01261">
    <property type="entry name" value="AP_endonuc_2"/>
    <property type="match status" value="1"/>
</dbReference>
<dbReference type="SMART" id="SM00518">
    <property type="entry name" value="AP2Ec"/>
    <property type="match status" value="1"/>
</dbReference>
<dbReference type="SUPFAM" id="SSF51658">
    <property type="entry name" value="Xylose isomerase-like"/>
    <property type="match status" value="1"/>
</dbReference>
<dbReference type="PROSITE" id="PS00729">
    <property type="entry name" value="AP_NUCLEASE_F2_1"/>
    <property type="match status" value="1"/>
</dbReference>
<dbReference type="PROSITE" id="PS00730">
    <property type="entry name" value="AP_NUCLEASE_F2_2"/>
    <property type="match status" value="1"/>
</dbReference>
<dbReference type="PROSITE" id="PS00731">
    <property type="entry name" value="AP_NUCLEASE_F2_3"/>
    <property type="match status" value="1"/>
</dbReference>
<dbReference type="PROSITE" id="PS51432">
    <property type="entry name" value="AP_NUCLEASE_F2_4"/>
    <property type="match status" value="1"/>
</dbReference>
<name>END4_ACTPJ</name>
<gene>
    <name evidence="1" type="primary">nfo</name>
    <name type="ordered locus">APJL_0375</name>
</gene>
<comment type="function">
    <text evidence="1">Endonuclease IV plays a role in DNA repair. It cleaves phosphodiester bonds at apurinic or apyrimidinic (AP) sites, generating a 3'-hydroxyl group and a 5'-terminal sugar phosphate.</text>
</comment>
<comment type="catalytic activity">
    <reaction evidence="1">
        <text>Endonucleolytic cleavage to 5'-phosphooligonucleotide end-products.</text>
        <dbReference type="EC" id="3.1.21.2"/>
    </reaction>
</comment>
<comment type="cofactor">
    <cofactor evidence="1">
        <name>Zn(2+)</name>
        <dbReference type="ChEBI" id="CHEBI:29105"/>
    </cofactor>
    <text evidence="1">Binds 3 Zn(2+) ions.</text>
</comment>
<comment type="similarity">
    <text evidence="1">Belongs to the AP endonuclease 2 family.</text>
</comment>
<proteinExistence type="inferred from homology"/>
<sequence length="280" mass="31473">MKYIGAHVSASGGVENAVLRAVEIGANAFALFTKNQRQWKAPALKADTIEKFKRFCKAHQFSPEHILPHDSYLINLGNPEAENLAKSREAFIDEMERANQLGLKLLNFHPGAHLNKISESECLARIAESINIAVDKVPNVIAVIENTAGQGSNLGYRFEHLAEIIDQVEDKNRVGVCLDTCHLFSAGYDISSLESCEQTFSEFERTVGFQYLRGMHLNGSKTPLGSRVDRHHTLREGTIGTDFCKFIMQDDRFDNIPLILETIQPEIWTEEIKFLRTLAK</sequence>
<organism>
    <name type="scientific">Actinobacillus pleuropneumoniae serotype 3 (strain JL03)</name>
    <dbReference type="NCBI Taxonomy" id="434271"/>
    <lineage>
        <taxon>Bacteria</taxon>
        <taxon>Pseudomonadati</taxon>
        <taxon>Pseudomonadota</taxon>
        <taxon>Gammaproteobacteria</taxon>
        <taxon>Pasteurellales</taxon>
        <taxon>Pasteurellaceae</taxon>
        <taxon>Actinobacillus</taxon>
    </lineage>
</organism>
<keyword id="KW-0227">DNA damage</keyword>
<keyword id="KW-0234">DNA repair</keyword>
<keyword id="KW-0255">Endonuclease</keyword>
<keyword id="KW-0378">Hydrolase</keyword>
<keyword id="KW-0479">Metal-binding</keyword>
<keyword id="KW-0540">Nuclease</keyword>
<keyword id="KW-0862">Zinc</keyword>
<reference key="1">
    <citation type="journal article" date="2008" name="PLoS ONE">
        <title>Genome biology of Actinobacillus pleuropneumoniae JL03, an isolate of serotype 3 prevalent in China.</title>
        <authorList>
            <person name="Xu Z."/>
            <person name="Zhou Y."/>
            <person name="Li L."/>
            <person name="Zhou R."/>
            <person name="Xiao S."/>
            <person name="Wan Y."/>
            <person name="Zhang S."/>
            <person name="Wang K."/>
            <person name="Li W."/>
            <person name="Li L."/>
            <person name="Jin H."/>
            <person name="Kang M."/>
            <person name="Dalai B."/>
            <person name="Li T."/>
            <person name="Liu L."/>
            <person name="Cheng Y."/>
            <person name="Zhang L."/>
            <person name="Xu T."/>
            <person name="Zheng H."/>
            <person name="Pu S."/>
            <person name="Wang B."/>
            <person name="Gu W."/>
            <person name="Zhang X.L."/>
            <person name="Zhu G.-F."/>
            <person name="Wang S."/>
            <person name="Zhao G.-P."/>
            <person name="Chen H."/>
        </authorList>
    </citation>
    <scope>NUCLEOTIDE SEQUENCE [LARGE SCALE GENOMIC DNA]</scope>
    <source>
        <strain>JL03</strain>
    </source>
</reference>